<dbReference type="EMBL" id="EF541132">
    <property type="protein sequence ID" value="ABQ32294.1"/>
    <property type="status" value="ALT_SEQ"/>
    <property type="molecule type" value="Genomic_DNA"/>
</dbReference>
<dbReference type="PDB" id="5T1X">
    <property type="method" value="X-ray"/>
    <property type="resolution" value="1.70 A"/>
    <property type="chains" value="A/C/E/G=24-133"/>
</dbReference>
<dbReference type="PDB" id="5T20">
    <property type="method" value="X-ray"/>
    <property type="resolution" value="1.91 A"/>
    <property type="chains" value="A/C/E/G/I/K/M/O=24-133"/>
</dbReference>
<dbReference type="PDBsum" id="5T1X"/>
<dbReference type="PDBsum" id="5T20"/>
<dbReference type="SMR" id="A5HMM7"/>
<dbReference type="GO" id="GO:0005537">
    <property type="term" value="F:D-mannose binding"/>
    <property type="evidence" value="ECO:0007669"/>
    <property type="project" value="UniProtKB-KW"/>
</dbReference>
<dbReference type="GO" id="GO:0051707">
    <property type="term" value="P:response to other organism"/>
    <property type="evidence" value="ECO:0007669"/>
    <property type="project" value="UniProtKB-ARBA"/>
</dbReference>
<dbReference type="CDD" id="cd00028">
    <property type="entry name" value="B_lectin"/>
    <property type="match status" value="2"/>
</dbReference>
<dbReference type="Gene3D" id="2.90.10.10">
    <property type="entry name" value="Bulb-type lectin domain"/>
    <property type="match status" value="2"/>
</dbReference>
<dbReference type="InterPro" id="IPR001480">
    <property type="entry name" value="Bulb-type_lectin_dom"/>
</dbReference>
<dbReference type="InterPro" id="IPR036426">
    <property type="entry name" value="Bulb-type_lectin_dom_sf"/>
</dbReference>
<dbReference type="SMART" id="SM00108">
    <property type="entry name" value="B_lectin"/>
    <property type="match status" value="2"/>
</dbReference>
<dbReference type="SUPFAM" id="SSF51110">
    <property type="entry name" value="alpha-D-mannose-specific plant lectins"/>
    <property type="match status" value="2"/>
</dbReference>
<dbReference type="PROSITE" id="PS50927">
    <property type="entry name" value="BULB_LECTIN"/>
    <property type="match status" value="2"/>
</dbReference>
<accession>A5HMM7</accession>
<name>LEC2_COLES</name>
<protein>
    <recommendedName>
        <fullName evidence="6">Mannose-specific lectin 2</fullName>
    </recommendedName>
    <alternativeName>
        <fullName evidence="6">Agglutinin</fullName>
    </alternativeName>
    <component>
        <recommendedName>
            <fullName evidence="6">Mannose-specific lectin 2 chain 1</fullName>
        </recommendedName>
    </component>
    <component>
        <recommendedName>
            <fullName evidence="6">Mannose-specific lectin 2 chain 2</fullName>
        </recommendedName>
    </component>
</protein>
<sequence length="261" mass="28743">MAKLLLFLLPAILGLLIPRSAVALGTNYLLSGQTLNTDGHLKNGDFDLVMQNDCNLVLYNGNWQSNTANNGRDCKLTLTDYGELVIKNGDGSTVWRSRAKSVKGNYAAVLHPDGRLVVFGPSVFKIDPWVPGLNSLRFRNIPFTDNLLFSGQVLYGDGRLTAKNHQLVMQGDCNLVLYGGKYGWQSNTHGNGEHCFLRLNHKGELIIKDDDFRTIWSSSSSSKQGDYVLILQDDGFAVIYGPAIWETSSKRSIADVGEDDG</sequence>
<keyword id="KW-0002">3D-structure</keyword>
<keyword id="KW-1015">Disulfide bond</keyword>
<keyword id="KW-0348">Hemagglutinin</keyword>
<keyword id="KW-0430">Lectin</keyword>
<keyword id="KW-0465">Mannose-binding</keyword>
<keyword id="KW-0677">Repeat</keyword>
<keyword id="KW-0732">Signal</keyword>
<organism>
    <name type="scientific">Colocasia esculenta</name>
    <name type="common">Wild taro</name>
    <name type="synonym">Arum esculentum</name>
    <dbReference type="NCBI Taxonomy" id="4460"/>
    <lineage>
        <taxon>Eukaryota</taxon>
        <taxon>Viridiplantae</taxon>
        <taxon>Streptophyta</taxon>
        <taxon>Embryophyta</taxon>
        <taxon>Tracheophyta</taxon>
        <taxon>Spermatophyta</taxon>
        <taxon>Magnoliopsida</taxon>
        <taxon>Liliopsida</taxon>
        <taxon>Araceae</taxon>
        <taxon>Aroideae</taxon>
        <taxon>Colocasieae</taxon>
        <taxon>Colocasia</taxon>
    </lineage>
</organism>
<reference key="1">
    <citation type="submission" date="2007-04" db="EMBL/GenBank/DDBJ databases">
        <title>Colocasia esculenta lectin gene.</title>
        <authorList>
            <person name="Nayak S.N."/>
            <person name="Bhat R."/>
            <person name="Krishnaraj P.U."/>
            <person name="Krishnamurthy K."/>
            <person name="Kuruvinashetti M.S."/>
        </authorList>
    </citation>
    <scope>NUCLEOTIDE SEQUENCE [GENOMIC DNA]</scope>
</reference>
<reference key="2">
    <citation type="journal article" date="2017" name="Glycobiology">
        <title>High-resolution crystal structures of Colocasia esculenta tarin lectin.</title>
        <authorList>
            <person name="Pereira P.R."/>
            <person name="Meagher J.L."/>
            <person name="Winter H.C."/>
            <person name="Goldstein I.J."/>
            <person name="Paschoalin V.M."/>
            <person name="Silva J.T."/>
            <person name="Stuckey J.A."/>
        </authorList>
    </citation>
    <scope>X-RAY CRYSTALLOGRAPHY (1.70 ANGSTROMS) OF 24-133 IN COMPLEX WITH BETA-D-MANNOSE</scope>
    <scope>DISULFIDE BONDS</scope>
    <scope>FUNCTION</scope>
</reference>
<comment type="function">
    <text evidence="2 5">Mannose-specific lectin (PubMed:27558840). Shows agglutinating activity towards erythrocytes from rabbit (By similarity).</text>
</comment>
<comment type="subunit">
    <text evidence="2">Forms heterotetramer of 2 chains 1 and 2 chains 2 arranged as a dimer of chain 1 and chain 2 heterodimers.</text>
</comment>
<comment type="sequence caution" evidence="6">
    <conflict type="erroneous gene model prediction">
        <sequence resource="EMBL-CDS" id="ABQ32294"/>
    </conflict>
</comment>
<evidence type="ECO:0000250" key="1">
    <source>
        <dbReference type="UniProtKB" id="Q39487"/>
    </source>
</evidence>
<evidence type="ECO:0000250" key="2">
    <source>
        <dbReference type="UniProtKB" id="R9RL27"/>
    </source>
</evidence>
<evidence type="ECO:0000255" key="3"/>
<evidence type="ECO:0000255" key="4">
    <source>
        <dbReference type="PROSITE-ProRule" id="PRU00038"/>
    </source>
</evidence>
<evidence type="ECO:0000269" key="5">
    <source>
    </source>
</evidence>
<evidence type="ECO:0000305" key="6"/>
<evidence type="ECO:0000305" key="7">
    <source>
    </source>
</evidence>
<evidence type="ECO:0007744" key="8">
    <source>
        <dbReference type="PDB" id="5T1X"/>
    </source>
</evidence>
<evidence type="ECO:0007744" key="9">
    <source>
        <dbReference type="PDB" id="5T20"/>
    </source>
</evidence>
<proteinExistence type="evidence at protein level"/>
<feature type="signal peptide" evidence="3">
    <location>
        <begin position="1"/>
        <end position="23"/>
    </location>
</feature>
<feature type="chain" id="PRO_5002683074" description="Mannose-specific lectin 2 chain 1">
    <location>
        <begin position="24"/>
        <end position="139"/>
    </location>
</feature>
<feature type="chain" id="PRO_0000450779" description="Mannose-specific lectin 2 chain 2">
    <location>
        <begin position="140"/>
        <end position="261"/>
    </location>
</feature>
<feature type="domain" description="Bulb-type lectin 1" evidence="4">
    <location>
        <begin position="26"/>
        <end position="131"/>
    </location>
</feature>
<feature type="domain" description="Bulb-type lectin 2" evidence="4">
    <location>
        <begin position="145"/>
        <end position="252"/>
    </location>
</feature>
<feature type="short sequence motif" description="Carbohydrate-binding motif 1" evidence="7">
    <location>
        <begin position="51"/>
        <end position="59"/>
    </location>
</feature>
<feature type="short sequence motif" description="Carbohydrate-binding motif 2" evidence="7">
    <location>
        <begin position="170"/>
        <end position="178"/>
    </location>
</feature>
<feature type="binding site" evidence="5 9">
    <location>
        <begin position="51"/>
        <end position="55"/>
    </location>
    <ligand>
        <name>beta-D-mannose</name>
        <dbReference type="ChEBI" id="CHEBI:28563"/>
    </ligand>
</feature>
<feature type="binding site" evidence="5 9">
    <location>
        <position position="59"/>
    </location>
    <ligand>
        <name>beta-D-mannose</name>
        <dbReference type="ChEBI" id="CHEBI:28563"/>
    </ligand>
</feature>
<feature type="binding site" evidence="2">
    <location>
        <position position="63"/>
    </location>
    <ligand>
        <name>beta-D-mannose</name>
        <dbReference type="ChEBI" id="CHEBI:28563"/>
    </ligand>
</feature>
<feature type="binding site" evidence="5 9">
    <location>
        <position position="64"/>
    </location>
    <ligand>
        <name>beta-D-mannose</name>
        <dbReference type="ChEBI" id="CHEBI:28563"/>
    </ligand>
</feature>
<feature type="binding site" evidence="2">
    <location>
        <begin position="170"/>
        <end position="174"/>
    </location>
    <ligand>
        <name>beta-D-mannose</name>
        <dbReference type="ChEBI" id="CHEBI:28563"/>
    </ligand>
</feature>
<feature type="binding site" evidence="1">
    <location>
        <position position="178"/>
    </location>
    <ligand>
        <name>beta-D-mannose</name>
        <dbReference type="ChEBI" id="CHEBI:28563"/>
    </ligand>
</feature>
<feature type="binding site" evidence="1">
    <location>
        <begin position="182"/>
        <end position="185"/>
    </location>
    <ligand>
        <name>beta-D-mannose</name>
        <dbReference type="ChEBI" id="CHEBI:28563"/>
    </ligand>
</feature>
<feature type="disulfide bond" evidence="4 5 8 9">
    <location>
        <begin position="54"/>
        <end position="74"/>
    </location>
</feature>
<feature type="disulfide bond" evidence="4">
    <location>
        <begin position="173"/>
        <end position="195"/>
    </location>
</feature>